<feature type="chain" id="PRO_0000076410" description="Sexual differentiation process putative subtilase-type proteinase isp6">
    <location>
        <begin position="1"/>
        <end position="467"/>
    </location>
</feature>
<feature type="domain" description="Inhibitor I9" evidence="1">
    <location>
        <begin position="86"/>
        <end position="176"/>
    </location>
</feature>
<feature type="domain" description="Peptidase S8" evidence="2">
    <location>
        <begin position="186"/>
        <end position="467"/>
    </location>
</feature>
<feature type="active site" description="Charge relay system" evidence="2">
    <location>
        <position position="221"/>
    </location>
</feature>
<feature type="active site" description="Charge relay system" evidence="2">
    <location>
        <position position="253"/>
    </location>
</feature>
<feature type="active site" description="Charge relay system" evidence="2">
    <location>
        <position position="409"/>
    </location>
</feature>
<protein>
    <recommendedName>
        <fullName>Sexual differentiation process putative subtilase-type proteinase isp6</fullName>
        <ecNumber>3.4.21.-</ecNumber>
    </recommendedName>
</protein>
<accession>P40903</accession>
<proteinExistence type="evidence at transcript level"/>
<keyword id="KW-0378">Hydrolase</keyword>
<keyword id="KW-0645">Protease</keyword>
<keyword id="KW-1185">Reference proteome</keyword>
<keyword id="KW-0720">Serine protease</keyword>
<reference key="1">
    <citation type="journal article" date="1994" name="Curr. Genet.">
        <title>Identification and characterization of genes induced during sexual differentiation in Schizosaccharomyces pombe.</title>
        <authorList>
            <person name="Sato S."/>
            <person name="Suzuki H."/>
            <person name="Widyastuti U."/>
            <person name="Hotta Y."/>
            <person name="Tabata S."/>
        </authorList>
    </citation>
    <scope>NUCLEOTIDE SEQUENCE [MRNA]</scope>
</reference>
<reference key="2">
    <citation type="journal article" date="2002" name="Nature">
        <title>The genome sequence of Schizosaccharomyces pombe.</title>
        <authorList>
            <person name="Wood V."/>
            <person name="Gwilliam R."/>
            <person name="Rajandream M.A."/>
            <person name="Lyne M.H."/>
            <person name="Lyne R."/>
            <person name="Stewart A."/>
            <person name="Sgouros J.G."/>
            <person name="Peat N."/>
            <person name="Hayles J."/>
            <person name="Baker S.G."/>
            <person name="Basham D."/>
            <person name="Bowman S."/>
            <person name="Brooks K."/>
            <person name="Brown D."/>
            <person name="Brown S."/>
            <person name="Chillingworth T."/>
            <person name="Churcher C.M."/>
            <person name="Collins M."/>
            <person name="Connor R."/>
            <person name="Cronin A."/>
            <person name="Davis P."/>
            <person name="Feltwell T."/>
            <person name="Fraser A."/>
            <person name="Gentles S."/>
            <person name="Goble A."/>
            <person name="Hamlin N."/>
            <person name="Harris D.E."/>
            <person name="Hidalgo J."/>
            <person name="Hodgson G."/>
            <person name="Holroyd S."/>
            <person name="Hornsby T."/>
            <person name="Howarth S."/>
            <person name="Huckle E.J."/>
            <person name="Hunt S."/>
            <person name="Jagels K."/>
            <person name="James K.D."/>
            <person name="Jones L."/>
            <person name="Jones M."/>
            <person name="Leather S."/>
            <person name="McDonald S."/>
            <person name="McLean J."/>
            <person name="Mooney P."/>
            <person name="Moule S."/>
            <person name="Mungall K.L."/>
            <person name="Murphy L.D."/>
            <person name="Niblett D."/>
            <person name="Odell C."/>
            <person name="Oliver K."/>
            <person name="O'Neil S."/>
            <person name="Pearson D."/>
            <person name="Quail M.A."/>
            <person name="Rabbinowitsch E."/>
            <person name="Rutherford K.M."/>
            <person name="Rutter S."/>
            <person name="Saunders D."/>
            <person name="Seeger K."/>
            <person name="Sharp S."/>
            <person name="Skelton J."/>
            <person name="Simmonds M.N."/>
            <person name="Squares R."/>
            <person name="Squares S."/>
            <person name="Stevens K."/>
            <person name="Taylor K."/>
            <person name="Taylor R.G."/>
            <person name="Tivey A."/>
            <person name="Walsh S.V."/>
            <person name="Warren T."/>
            <person name="Whitehead S."/>
            <person name="Woodward J.R."/>
            <person name="Volckaert G."/>
            <person name="Aert R."/>
            <person name="Robben J."/>
            <person name="Grymonprez B."/>
            <person name="Weltjens I."/>
            <person name="Vanstreels E."/>
            <person name="Rieger M."/>
            <person name="Schaefer M."/>
            <person name="Mueller-Auer S."/>
            <person name="Gabel C."/>
            <person name="Fuchs M."/>
            <person name="Duesterhoeft A."/>
            <person name="Fritzc C."/>
            <person name="Holzer E."/>
            <person name="Moestl D."/>
            <person name="Hilbert H."/>
            <person name="Borzym K."/>
            <person name="Langer I."/>
            <person name="Beck A."/>
            <person name="Lehrach H."/>
            <person name="Reinhardt R."/>
            <person name="Pohl T.M."/>
            <person name="Eger P."/>
            <person name="Zimmermann W."/>
            <person name="Wedler H."/>
            <person name="Wambutt R."/>
            <person name="Purnelle B."/>
            <person name="Goffeau A."/>
            <person name="Cadieu E."/>
            <person name="Dreano S."/>
            <person name="Gloux S."/>
            <person name="Lelaure V."/>
            <person name="Mottier S."/>
            <person name="Galibert F."/>
            <person name="Aves S.J."/>
            <person name="Xiang Z."/>
            <person name="Hunt C."/>
            <person name="Moore K."/>
            <person name="Hurst S.M."/>
            <person name="Lucas M."/>
            <person name="Rochet M."/>
            <person name="Gaillardin C."/>
            <person name="Tallada V.A."/>
            <person name="Garzon A."/>
            <person name="Thode G."/>
            <person name="Daga R.R."/>
            <person name="Cruzado L."/>
            <person name="Jimenez J."/>
            <person name="Sanchez M."/>
            <person name="del Rey F."/>
            <person name="Benito J."/>
            <person name="Dominguez A."/>
            <person name="Revuelta J.L."/>
            <person name="Moreno S."/>
            <person name="Armstrong J."/>
            <person name="Forsburg S.L."/>
            <person name="Cerutti L."/>
            <person name="Lowe T."/>
            <person name="McCombie W.R."/>
            <person name="Paulsen I."/>
            <person name="Potashkin J."/>
            <person name="Shpakovski G.V."/>
            <person name="Ussery D."/>
            <person name="Barrell B.G."/>
            <person name="Nurse P."/>
        </authorList>
    </citation>
    <scope>NUCLEOTIDE SEQUENCE [LARGE SCALE GENOMIC DNA]</scope>
    <source>
        <strain>972 / ATCC 24843</strain>
    </source>
</reference>
<sequence>MRIPYSNLFSAAAGLALFASTACAAPVMPATDSDIAHAGIRPELDNAFYDSHGEAATPKHKPHAGPNAAPLLSASNADTTGLDSHYIIVLQPDLSEQEFQAHTNWVSEMHQMDIASQEDEYYDTSDSNYMFGLKHVYDFGEDSFKGYSGQFSSNIVEQIRLHPHVIAVERDQVVSIKKLETQSGAPWGLARISHKSVKYDDIGKYVYDSSAGDNITAYVVDTGVSIHHVEFEGRASWGATIPSGDVDEDNNGHGTHVAGTIASRAYGVAKKAEIVAVKVLRSSGSGTMADVIAGVEWTVRHHKSSGKKTSVGNMSLGGGNSFVLDMAVDSAVTNGVIYAVAAGNEYDDACYSSPAASKKAITVGASTINDQMAYFSNYGSCVDIFAPGLNILSTWIGSNTSTNTISGTSMATPHVAGLSAYYLGLHPAASASEVKDAIIKMGIHDVLLSIPVGSSTINLLAFNGAQE</sequence>
<evidence type="ECO:0000255" key="1"/>
<evidence type="ECO:0000255" key="2">
    <source>
        <dbReference type="PROSITE-ProRule" id="PRU01240"/>
    </source>
</evidence>
<evidence type="ECO:0000305" key="3"/>
<dbReference type="EC" id="3.4.21.-"/>
<dbReference type="EMBL" id="D14063">
    <property type="protein sequence ID" value="BAA03149.1"/>
    <property type="molecule type" value="mRNA"/>
</dbReference>
<dbReference type="EMBL" id="CU329670">
    <property type="protein sequence ID" value="CAB11474.1"/>
    <property type="molecule type" value="Genomic_DNA"/>
</dbReference>
<dbReference type="PIR" id="S45493">
    <property type="entry name" value="S45493"/>
</dbReference>
<dbReference type="RefSeq" id="NP_593815.1">
    <property type="nucleotide sequence ID" value="NM_001019245.2"/>
</dbReference>
<dbReference type="SMR" id="P40903"/>
<dbReference type="BioGRID" id="279529">
    <property type="interactions" value="10"/>
</dbReference>
<dbReference type="FunCoup" id="P40903">
    <property type="interactions" value="26"/>
</dbReference>
<dbReference type="STRING" id="284812.P40903"/>
<dbReference type="MEROPS" id="S08.A54"/>
<dbReference type="iPTMnet" id="P40903"/>
<dbReference type="PaxDb" id="4896-SPAC4A8.04.1"/>
<dbReference type="EnsemblFungi" id="SPAC4A8.04.1">
    <property type="protein sequence ID" value="SPAC4A8.04.1:pep"/>
    <property type="gene ID" value="SPAC4A8.04"/>
</dbReference>
<dbReference type="GeneID" id="2543097"/>
<dbReference type="KEGG" id="spo:2543097"/>
<dbReference type="PomBase" id="SPAC4A8.04">
    <property type="gene designation" value="isp6"/>
</dbReference>
<dbReference type="VEuPathDB" id="FungiDB:SPAC4A8.04"/>
<dbReference type="eggNOG" id="KOG1153">
    <property type="taxonomic scope" value="Eukaryota"/>
</dbReference>
<dbReference type="HOGENOM" id="CLU_011263_1_4_1"/>
<dbReference type="InParanoid" id="P40903"/>
<dbReference type="OMA" id="DSNYMFG"/>
<dbReference type="PhylomeDB" id="P40903"/>
<dbReference type="Reactome" id="R-SPO-8866427">
    <property type="pathway name" value="VLDLR internalisation and degradation"/>
</dbReference>
<dbReference type="Reactome" id="R-SPO-8964038">
    <property type="pathway name" value="LDL clearance"/>
</dbReference>
<dbReference type="PRO" id="PR:P40903"/>
<dbReference type="Proteomes" id="UP000002485">
    <property type="component" value="Chromosome I"/>
</dbReference>
<dbReference type="GO" id="GO:0005615">
    <property type="term" value="C:extracellular space"/>
    <property type="evidence" value="ECO:0000318"/>
    <property type="project" value="GO_Central"/>
</dbReference>
<dbReference type="GO" id="GO:0000324">
    <property type="term" value="C:fungal-type vacuole"/>
    <property type="evidence" value="ECO:0000314"/>
    <property type="project" value="PomBase"/>
</dbReference>
<dbReference type="GO" id="GO:0000328">
    <property type="term" value="C:fungal-type vacuole lumen"/>
    <property type="evidence" value="ECO:0000269"/>
    <property type="project" value="PomBase"/>
</dbReference>
<dbReference type="GO" id="GO:0005794">
    <property type="term" value="C:Golgi apparatus"/>
    <property type="evidence" value="ECO:0007005"/>
    <property type="project" value="PomBase"/>
</dbReference>
<dbReference type="GO" id="GO:0031906">
    <property type="term" value="C:late endosome lumen"/>
    <property type="evidence" value="ECO:0000269"/>
    <property type="project" value="PomBase"/>
</dbReference>
<dbReference type="GO" id="GO:0004175">
    <property type="term" value="F:endopeptidase activity"/>
    <property type="evidence" value="ECO:0000315"/>
    <property type="project" value="PomBase"/>
</dbReference>
<dbReference type="GO" id="GO:0008233">
    <property type="term" value="F:peptidase activity"/>
    <property type="evidence" value="ECO:0000315"/>
    <property type="project" value="PomBase"/>
</dbReference>
<dbReference type="GO" id="GO:0004252">
    <property type="term" value="F:serine-type endopeptidase activity"/>
    <property type="evidence" value="ECO:0000314"/>
    <property type="project" value="PomBase"/>
</dbReference>
<dbReference type="GO" id="GO:0006914">
    <property type="term" value="P:autophagy"/>
    <property type="evidence" value="ECO:0000315"/>
    <property type="project" value="PomBase"/>
</dbReference>
<dbReference type="GO" id="GO:0000747">
    <property type="term" value="P:conjugation with cellular fusion"/>
    <property type="evidence" value="ECO:0000315"/>
    <property type="project" value="PomBase"/>
</dbReference>
<dbReference type="GO" id="GO:0031638">
    <property type="term" value="P:zymogen activation"/>
    <property type="evidence" value="ECO:0000315"/>
    <property type="project" value="PomBase"/>
</dbReference>
<dbReference type="CDD" id="cd04077">
    <property type="entry name" value="Peptidases_S8_PCSK9_ProteinaseK_like"/>
    <property type="match status" value="1"/>
</dbReference>
<dbReference type="FunFam" id="3.40.50.200:FF:000007">
    <property type="entry name" value="Subtilisin-like serine protease"/>
    <property type="match status" value="1"/>
</dbReference>
<dbReference type="Gene3D" id="3.30.70.80">
    <property type="entry name" value="Peptidase S8 propeptide/proteinase inhibitor I9"/>
    <property type="match status" value="1"/>
</dbReference>
<dbReference type="Gene3D" id="3.40.50.200">
    <property type="entry name" value="Peptidase S8/S53 domain"/>
    <property type="match status" value="1"/>
</dbReference>
<dbReference type="InterPro" id="IPR034193">
    <property type="entry name" value="PCSK9_ProteinaseK-like"/>
</dbReference>
<dbReference type="InterPro" id="IPR000209">
    <property type="entry name" value="Peptidase_S8/S53_dom"/>
</dbReference>
<dbReference type="InterPro" id="IPR036852">
    <property type="entry name" value="Peptidase_S8/S53_dom_sf"/>
</dbReference>
<dbReference type="InterPro" id="IPR023827">
    <property type="entry name" value="Peptidase_S8_Asp-AS"/>
</dbReference>
<dbReference type="InterPro" id="IPR022398">
    <property type="entry name" value="Peptidase_S8_His-AS"/>
</dbReference>
<dbReference type="InterPro" id="IPR023828">
    <property type="entry name" value="Peptidase_S8_Ser-AS"/>
</dbReference>
<dbReference type="InterPro" id="IPR050131">
    <property type="entry name" value="Peptidase_S8_subtilisin-like"/>
</dbReference>
<dbReference type="InterPro" id="IPR015500">
    <property type="entry name" value="Peptidase_S8_subtilisin-rel"/>
</dbReference>
<dbReference type="InterPro" id="IPR010259">
    <property type="entry name" value="S8pro/Inhibitor_I9"/>
</dbReference>
<dbReference type="InterPro" id="IPR037045">
    <property type="entry name" value="S8pro/Inhibitor_I9_sf"/>
</dbReference>
<dbReference type="PANTHER" id="PTHR43806:SF11">
    <property type="entry name" value="CEREVISIN-RELATED"/>
    <property type="match status" value="1"/>
</dbReference>
<dbReference type="PANTHER" id="PTHR43806">
    <property type="entry name" value="PEPTIDASE S8"/>
    <property type="match status" value="1"/>
</dbReference>
<dbReference type="Pfam" id="PF05922">
    <property type="entry name" value="Inhibitor_I9"/>
    <property type="match status" value="1"/>
</dbReference>
<dbReference type="Pfam" id="PF00082">
    <property type="entry name" value="Peptidase_S8"/>
    <property type="match status" value="1"/>
</dbReference>
<dbReference type="PRINTS" id="PR00723">
    <property type="entry name" value="SUBTILISIN"/>
</dbReference>
<dbReference type="SUPFAM" id="SSF54897">
    <property type="entry name" value="Protease propeptides/inhibitors"/>
    <property type="match status" value="1"/>
</dbReference>
<dbReference type="SUPFAM" id="SSF52743">
    <property type="entry name" value="Subtilisin-like"/>
    <property type="match status" value="1"/>
</dbReference>
<dbReference type="PROSITE" id="PS51892">
    <property type="entry name" value="SUBTILASE"/>
    <property type="match status" value="1"/>
</dbReference>
<dbReference type="PROSITE" id="PS00136">
    <property type="entry name" value="SUBTILASE_ASP"/>
    <property type="match status" value="1"/>
</dbReference>
<dbReference type="PROSITE" id="PS00137">
    <property type="entry name" value="SUBTILASE_HIS"/>
    <property type="match status" value="1"/>
</dbReference>
<dbReference type="PROSITE" id="PS00138">
    <property type="entry name" value="SUBTILASE_SER"/>
    <property type="match status" value="1"/>
</dbReference>
<name>ISP6_SCHPO</name>
<comment type="developmental stage">
    <text>Transcribed specifically during sexual development.</text>
</comment>
<comment type="similarity">
    <text evidence="3">Belongs to the peptidase S8 family.</text>
</comment>
<gene>
    <name type="primary">isp6</name>
    <name type="ORF">SPAC4A8.04</name>
</gene>
<organism>
    <name type="scientific">Schizosaccharomyces pombe (strain 972 / ATCC 24843)</name>
    <name type="common">Fission yeast</name>
    <dbReference type="NCBI Taxonomy" id="284812"/>
    <lineage>
        <taxon>Eukaryota</taxon>
        <taxon>Fungi</taxon>
        <taxon>Dikarya</taxon>
        <taxon>Ascomycota</taxon>
        <taxon>Taphrinomycotina</taxon>
        <taxon>Schizosaccharomycetes</taxon>
        <taxon>Schizosaccharomycetales</taxon>
        <taxon>Schizosaccharomycetaceae</taxon>
        <taxon>Schizosaccharomyces</taxon>
    </lineage>
</organism>